<evidence type="ECO:0000255" key="1">
    <source>
        <dbReference type="HAMAP-Rule" id="MF_00409"/>
    </source>
</evidence>
<proteinExistence type="inferred from homology"/>
<dbReference type="EC" id="2.7.1.130" evidence="1"/>
<dbReference type="EMBL" id="CP000446">
    <property type="protein sequence ID" value="ABI39492.1"/>
    <property type="molecule type" value="Genomic_DNA"/>
</dbReference>
<dbReference type="RefSeq" id="WP_011623175.1">
    <property type="nucleotide sequence ID" value="NC_008321.1"/>
</dbReference>
<dbReference type="SMR" id="Q0HHH5"/>
<dbReference type="KEGG" id="she:Shewmr4_2421"/>
<dbReference type="HOGENOM" id="CLU_038816_2_0_6"/>
<dbReference type="UniPathway" id="UPA00359">
    <property type="reaction ID" value="UER00482"/>
</dbReference>
<dbReference type="GO" id="GO:0005886">
    <property type="term" value="C:plasma membrane"/>
    <property type="evidence" value="ECO:0007669"/>
    <property type="project" value="TreeGrafter"/>
</dbReference>
<dbReference type="GO" id="GO:0005524">
    <property type="term" value="F:ATP binding"/>
    <property type="evidence" value="ECO:0007669"/>
    <property type="project" value="UniProtKB-UniRule"/>
</dbReference>
<dbReference type="GO" id="GO:0009029">
    <property type="term" value="F:tetraacyldisaccharide 4'-kinase activity"/>
    <property type="evidence" value="ECO:0007669"/>
    <property type="project" value="UniProtKB-UniRule"/>
</dbReference>
<dbReference type="GO" id="GO:0009245">
    <property type="term" value="P:lipid A biosynthetic process"/>
    <property type="evidence" value="ECO:0007669"/>
    <property type="project" value="UniProtKB-UniRule"/>
</dbReference>
<dbReference type="GO" id="GO:0009244">
    <property type="term" value="P:lipopolysaccharide core region biosynthetic process"/>
    <property type="evidence" value="ECO:0007669"/>
    <property type="project" value="TreeGrafter"/>
</dbReference>
<dbReference type="CDD" id="cd01983">
    <property type="entry name" value="SIMIBI"/>
    <property type="match status" value="1"/>
</dbReference>
<dbReference type="HAMAP" id="MF_00409">
    <property type="entry name" value="LpxK"/>
    <property type="match status" value="1"/>
</dbReference>
<dbReference type="InterPro" id="IPR003758">
    <property type="entry name" value="LpxK"/>
</dbReference>
<dbReference type="InterPro" id="IPR027417">
    <property type="entry name" value="P-loop_NTPase"/>
</dbReference>
<dbReference type="NCBIfam" id="TIGR00682">
    <property type="entry name" value="lpxK"/>
    <property type="match status" value="1"/>
</dbReference>
<dbReference type="PANTHER" id="PTHR42724">
    <property type="entry name" value="TETRAACYLDISACCHARIDE 4'-KINASE"/>
    <property type="match status" value="1"/>
</dbReference>
<dbReference type="PANTHER" id="PTHR42724:SF1">
    <property type="entry name" value="TETRAACYLDISACCHARIDE 4'-KINASE, MITOCHONDRIAL-RELATED"/>
    <property type="match status" value="1"/>
</dbReference>
<dbReference type="Pfam" id="PF02606">
    <property type="entry name" value="LpxK"/>
    <property type="match status" value="1"/>
</dbReference>
<dbReference type="SUPFAM" id="SSF52540">
    <property type="entry name" value="P-loop containing nucleoside triphosphate hydrolases"/>
    <property type="match status" value="1"/>
</dbReference>
<organism>
    <name type="scientific">Shewanella sp. (strain MR-4)</name>
    <dbReference type="NCBI Taxonomy" id="60480"/>
    <lineage>
        <taxon>Bacteria</taxon>
        <taxon>Pseudomonadati</taxon>
        <taxon>Pseudomonadota</taxon>
        <taxon>Gammaproteobacteria</taxon>
        <taxon>Alteromonadales</taxon>
        <taxon>Shewanellaceae</taxon>
        <taxon>Shewanella</taxon>
    </lineage>
</organism>
<comment type="function">
    <text evidence="1">Transfers the gamma-phosphate of ATP to the 4'-position of a tetraacyldisaccharide 1-phosphate intermediate (termed DS-1-P) to form tetraacyldisaccharide 1,4'-bis-phosphate (lipid IVA).</text>
</comment>
<comment type="catalytic activity">
    <reaction evidence="1">
        <text>a lipid A disaccharide + ATP = a lipid IVA + ADP + H(+)</text>
        <dbReference type="Rhea" id="RHEA:67840"/>
        <dbReference type="ChEBI" id="CHEBI:15378"/>
        <dbReference type="ChEBI" id="CHEBI:30616"/>
        <dbReference type="ChEBI" id="CHEBI:176343"/>
        <dbReference type="ChEBI" id="CHEBI:176425"/>
        <dbReference type="ChEBI" id="CHEBI:456216"/>
        <dbReference type="EC" id="2.7.1.130"/>
    </reaction>
</comment>
<comment type="pathway">
    <text evidence="1">Glycolipid biosynthesis; lipid IV(A) biosynthesis; lipid IV(A) from (3R)-3-hydroxytetradecanoyl-[acyl-carrier-protein] and UDP-N-acetyl-alpha-D-glucosamine: step 6/6.</text>
</comment>
<comment type="similarity">
    <text evidence="1">Belongs to the LpxK family.</text>
</comment>
<gene>
    <name evidence="1" type="primary">lpxK</name>
    <name type="ordered locus">Shewmr4_2421</name>
</gene>
<accession>Q0HHH5</accession>
<protein>
    <recommendedName>
        <fullName evidence="1">Tetraacyldisaccharide 4'-kinase</fullName>
        <ecNumber evidence="1">2.7.1.130</ecNumber>
    </recommendedName>
    <alternativeName>
        <fullName evidence="1">Lipid A 4'-kinase</fullName>
    </alternativeName>
</protein>
<keyword id="KW-0067">ATP-binding</keyword>
<keyword id="KW-0418">Kinase</keyword>
<keyword id="KW-0441">Lipid A biosynthesis</keyword>
<keyword id="KW-0444">Lipid biosynthesis</keyword>
<keyword id="KW-0443">Lipid metabolism</keyword>
<keyword id="KW-0547">Nucleotide-binding</keyword>
<keyword id="KW-0808">Transferase</keyword>
<sequence>MQVLVNKIWYEGHPLRWLLLPFSVLFALITAIRRSLFRLGLKSQTPLPVPVIVVGNITVGGSGKTPTVIYLIELLRQQGFNPGVISRGYGADMQGVKVVTAADSAASVGDEPAMIVARTGVPMVVGAKRVDTAKALLAQFAVDVIICDDGLQHYALGRDIELVVIDGKRGLGNRHLLPAGPLREGAWRLNQVDFVVVNGGPAQANQYEMQLSPSAVLPVNPKAVAVFDPTQPVVAMAGIGHPARFFETLTQQGFQLALSHGFDDHQAYDKEVLCELAASRPLMMTEKDAVKCRDFAQENWWYLAVDAKLSPQFDQQLLSRVRSVAAAKQGKSHGV</sequence>
<name>LPXK_SHESM</name>
<reference key="1">
    <citation type="submission" date="2006-08" db="EMBL/GenBank/DDBJ databases">
        <title>Complete sequence of Shewanella sp. MR-4.</title>
        <authorList>
            <consortium name="US DOE Joint Genome Institute"/>
            <person name="Copeland A."/>
            <person name="Lucas S."/>
            <person name="Lapidus A."/>
            <person name="Barry K."/>
            <person name="Detter J.C."/>
            <person name="Glavina del Rio T."/>
            <person name="Hammon N."/>
            <person name="Israni S."/>
            <person name="Dalin E."/>
            <person name="Tice H."/>
            <person name="Pitluck S."/>
            <person name="Kiss H."/>
            <person name="Brettin T."/>
            <person name="Bruce D."/>
            <person name="Han C."/>
            <person name="Tapia R."/>
            <person name="Gilna P."/>
            <person name="Schmutz J."/>
            <person name="Larimer F."/>
            <person name="Land M."/>
            <person name="Hauser L."/>
            <person name="Kyrpides N."/>
            <person name="Mikhailova N."/>
            <person name="Nealson K."/>
            <person name="Konstantinidis K."/>
            <person name="Klappenbach J."/>
            <person name="Tiedje J."/>
            <person name="Richardson P."/>
        </authorList>
    </citation>
    <scope>NUCLEOTIDE SEQUENCE [LARGE SCALE GENOMIC DNA]</scope>
    <source>
        <strain>MR-4</strain>
    </source>
</reference>
<feature type="chain" id="PRO_0000291246" description="Tetraacyldisaccharide 4'-kinase">
    <location>
        <begin position="1"/>
        <end position="335"/>
    </location>
</feature>
<feature type="binding site" evidence="1">
    <location>
        <begin position="58"/>
        <end position="65"/>
    </location>
    <ligand>
        <name>ATP</name>
        <dbReference type="ChEBI" id="CHEBI:30616"/>
    </ligand>
</feature>